<dbReference type="EMBL" id="CP001108">
    <property type="protein sequence ID" value="ACF47069.1"/>
    <property type="molecule type" value="Genomic_DNA"/>
</dbReference>
<dbReference type="RefSeq" id="WP_012506601.1">
    <property type="nucleotide sequence ID" value="NC_011059.1"/>
</dbReference>
<dbReference type="SMR" id="B4S5C3"/>
<dbReference type="STRING" id="290512.Paes_2059"/>
<dbReference type="KEGG" id="paa:Paes_2059"/>
<dbReference type="eggNOG" id="COG0091">
    <property type="taxonomic scope" value="Bacteria"/>
</dbReference>
<dbReference type="HOGENOM" id="CLU_083987_3_1_10"/>
<dbReference type="Proteomes" id="UP000002725">
    <property type="component" value="Chromosome"/>
</dbReference>
<dbReference type="GO" id="GO:0022625">
    <property type="term" value="C:cytosolic large ribosomal subunit"/>
    <property type="evidence" value="ECO:0007669"/>
    <property type="project" value="TreeGrafter"/>
</dbReference>
<dbReference type="GO" id="GO:0019843">
    <property type="term" value="F:rRNA binding"/>
    <property type="evidence" value="ECO:0007669"/>
    <property type="project" value="UniProtKB-UniRule"/>
</dbReference>
<dbReference type="GO" id="GO:0003735">
    <property type="term" value="F:structural constituent of ribosome"/>
    <property type="evidence" value="ECO:0007669"/>
    <property type="project" value="InterPro"/>
</dbReference>
<dbReference type="GO" id="GO:0006412">
    <property type="term" value="P:translation"/>
    <property type="evidence" value="ECO:0007669"/>
    <property type="project" value="UniProtKB-UniRule"/>
</dbReference>
<dbReference type="CDD" id="cd00336">
    <property type="entry name" value="Ribosomal_L22"/>
    <property type="match status" value="1"/>
</dbReference>
<dbReference type="Gene3D" id="3.90.470.10">
    <property type="entry name" value="Ribosomal protein L22/L17"/>
    <property type="match status" value="1"/>
</dbReference>
<dbReference type="HAMAP" id="MF_01331_B">
    <property type="entry name" value="Ribosomal_uL22_B"/>
    <property type="match status" value="1"/>
</dbReference>
<dbReference type="InterPro" id="IPR001063">
    <property type="entry name" value="Ribosomal_uL22"/>
</dbReference>
<dbReference type="InterPro" id="IPR005727">
    <property type="entry name" value="Ribosomal_uL22_bac/chlpt-type"/>
</dbReference>
<dbReference type="InterPro" id="IPR047867">
    <property type="entry name" value="Ribosomal_uL22_bac/org-type"/>
</dbReference>
<dbReference type="InterPro" id="IPR036394">
    <property type="entry name" value="Ribosomal_uL22_sf"/>
</dbReference>
<dbReference type="NCBIfam" id="TIGR01044">
    <property type="entry name" value="rplV_bact"/>
    <property type="match status" value="1"/>
</dbReference>
<dbReference type="PANTHER" id="PTHR13501">
    <property type="entry name" value="CHLOROPLAST 50S RIBOSOMAL PROTEIN L22-RELATED"/>
    <property type="match status" value="1"/>
</dbReference>
<dbReference type="PANTHER" id="PTHR13501:SF8">
    <property type="entry name" value="LARGE RIBOSOMAL SUBUNIT PROTEIN UL22M"/>
    <property type="match status" value="1"/>
</dbReference>
<dbReference type="Pfam" id="PF00237">
    <property type="entry name" value="Ribosomal_L22"/>
    <property type="match status" value="1"/>
</dbReference>
<dbReference type="SUPFAM" id="SSF54843">
    <property type="entry name" value="Ribosomal protein L22"/>
    <property type="match status" value="1"/>
</dbReference>
<proteinExistence type="inferred from homology"/>
<keyword id="KW-0687">Ribonucleoprotein</keyword>
<keyword id="KW-0689">Ribosomal protein</keyword>
<keyword id="KW-0694">RNA-binding</keyword>
<keyword id="KW-0699">rRNA-binding</keyword>
<accession>B4S5C3</accession>
<protein>
    <recommendedName>
        <fullName evidence="1">Large ribosomal subunit protein uL22</fullName>
    </recommendedName>
    <alternativeName>
        <fullName evidence="2">50S ribosomal protein L22</fullName>
    </alternativeName>
</protein>
<evidence type="ECO:0000255" key="1">
    <source>
        <dbReference type="HAMAP-Rule" id="MF_01331"/>
    </source>
</evidence>
<evidence type="ECO:0000305" key="2"/>
<sequence>MQAKAILRHTPTSPRKMRIVAGLIRGKQVDQAKAILLNSTKAASRQVIQTLKSAVANYAQLNPEDRAGDNELVVKTIFVDEGPTIKRMLPAPMGRAYRIRKRSNHLTIVVDKGNPVKK</sequence>
<comment type="function">
    <text evidence="1">This protein binds specifically to 23S rRNA; its binding is stimulated by other ribosomal proteins, e.g. L4, L17, and L20. It is important during the early stages of 50S assembly. It makes multiple contacts with different domains of the 23S rRNA in the assembled 50S subunit and ribosome (By similarity).</text>
</comment>
<comment type="function">
    <text evidence="1">The globular domain of the protein is located near the polypeptide exit tunnel on the outside of the subunit, while an extended beta-hairpin is found that lines the wall of the exit tunnel in the center of the 70S ribosome.</text>
</comment>
<comment type="subunit">
    <text evidence="1">Part of the 50S ribosomal subunit.</text>
</comment>
<comment type="similarity">
    <text evidence="1">Belongs to the universal ribosomal protein uL22 family.</text>
</comment>
<gene>
    <name evidence="1" type="primary">rplV</name>
    <name type="ordered locus">Paes_2059</name>
</gene>
<name>RL22_PROA2</name>
<reference key="1">
    <citation type="submission" date="2008-06" db="EMBL/GenBank/DDBJ databases">
        <title>Complete sequence of chromosome of Prosthecochloris aestuarii DSM 271.</title>
        <authorList>
            <consortium name="US DOE Joint Genome Institute"/>
            <person name="Lucas S."/>
            <person name="Copeland A."/>
            <person name="Lapidus A."/>
            <person name="Glavina del Rio T."/>
            <person name="Dalin E."/>
            <person name="Tice H."/>
            <person name="Bruce D."/>
            <person name="Goodwin L."/>
            <person name="Pitluck S."/>
            <person name="Schmutz J."/>
            <person name="Larimer F."/>
            <person name="Land M."/>
            <person name="Hauser L."/>
            <person name="Kyrpides N."/>
            <person name="Anderson I."/>
            <person name="Liu Z."/>
            <person name="Li T."/>
            <person name="Zhao F."/>
            <person name="Overmann J."/>
            <person name="Bryant D.A."/>
            <person name="Richardson P."/>
        </authorList>
    </citation>
    <scope>NUCLEOTIDE SEQUENCE [LARGE SCALE GENOMIC DNA]</scope>
    <source>
        <strain>DSM 271 / SK 413</strain>
    </source>
</reference>
<organism>
    <name type="scientific">Prosthecochloris aestuarii (strain DSM 271 / SK 413)</name>
    <dbReference type="NCBI Taxonomy" id="290512"/>
    <lineage>
        <taxon>Bacteria</taxon>
        <taxon>Pseudomonadati</taxon>
        <taxon>Chlorobiota</taxon>
        <taxon>Chlorobiia</taxon>
        <taxon>Chlorobiales</taxon>
        <taxon>Chlorobiaceae</taxon>
        <taxon>Prosthecochloris</taxon>
    </lineage>
</organism>
<feature type="chain" id="PRO_1000142294" description="Large ribosomal subunit protein uL22">
    <location>
        <begin position="1"/>
        <end position="118"/>
    </location>
</feature>